<keyword id="KW-0002">3D-structure</keyword>
<keyword id="KW-0106">Calcium</keyword>
<keyword id="KW-0479">Metal-binding</keyword>
<keyword id="KW-1185">Reference proteome</keyword>
<keyword id="KW-0677">Repeat</keyword>
<comment type="subunit">
    <text evidence="4">Homodimer (PubMed:21756915). Homodimers may assemble into larger stable oligomers (PubMed:21756915).</text>
</comment>
<comment type="tissue specificity">
    <text evidence="3 5">In larva at 5 days post-fertilization, shows very restricted expression only in a few large cells of the olfactory placode (PubMed:18275604). More widely expressed in the adult (PubMed:18275604). Expressed at higher levels in gut than in spleen, head kidney and gill (PubMed:31546038).</text>
</comment>
<comment type="developmental stage">
    <text evidence="5">Low levels detected at 10 hours post-fertilization (hpf) with negligible levels at 24 hpf and 48 hpf, and increased levels at 72 hpf.</text>
</comment>
<comment type="induction">
    <text evidence="5">Induced by poly(I:C) in gut but not in spleen (PubMed:31546038). Induced following infection with spring viremia of carp virus (SVCV) (PubMed:31546038). Down-regulated following infection with bacterial pathogen Edwardsiella tarda (PubMed:31546038).</text>
</comment>
<comment type="similarity">
    <text evidence="2">Belongs to the S-100 family.</text>
</comment>
<feature type="chain" id="PRO_0000458182" description="Protein S100-Z">
    <location>
        <begin position="1"/>
        <end position="99"/>
    </location>
</feature>
<feature type="domain" description="EF-hand 1" evidence="6">
    <location>
        <begin position="13"/>
        <end position="48"/>
    </location>
</feature>
<feature type="domain" description="EF-hand 2" evidence="1">
    <location>
        <begin position="50"/>
        <end position="85"/>
    </location>
</feature>
<feature type="binding site" evidence="4 10">
    <location>
        <position position="20"/>
    </location>
    <ligand>
        <name>Ca(2+)</name>
        <dbReference type="ChEBI" id="CHEBI:29108"/>
        <label>1</label>
        <note>low affinity</note>
    </ligand>
</feature>
<feature type="binding site" evidence="4 10">
    <location>
        <position position="23"/>
    </location>
    <ligand>
        <name>Ca(2+)</name>
        <dbReference type="ChEBI" id="CHEBI:29108"/>
        <label>1</label>
        <note>low affinity</note>
    </ligand>
</feature>
<feature type="binding site" evidence="4 10">
    <location>
        <position position="25"/>
    </location>
    <ligand>
        <name>Ca(2+)</name>
        <dbReference type="ChEBI" id="CHEBI:29108"/>
        <label>1</label>
        <note>low affinity</note>
    </ligand>
</feature>
<feature type="binding site" evidence="4 10">
    <location>
        <position position="28"/>
    </location>
    <ligand>
        <name>Ca(2+)</name>
        <dbReference type="ChEBI" id="CHEBI:29108"/>
        <label>1</label>
        <note>low affinity</note>
    </ligand>
</feature>
<feature type="binding site" evidence="4 10">
    <location>
        <position position="33"/>
    </location>
    <ligand>
        <name>Ca(2+)</name>
        <dbReference type="ChEBI" id="CHEBI:29108"/>
        <label>1</label>
        <note>low affinity</note>
    </ligand>
</feature>
<feature type="binding site" evidence="4 10">
    <location>
        <position position="63"/>
    </location>
    <ligand>
        <name>Ca(2+)</name>
        <dbReference type="ChEBI" id="CHEBI:29108"/>
        <label>2</label>
        <note>high affinity</note>
    </ligand>
</feature>
<feature type="binding site" evidence="4 10">
    <location>
        <position position="65"/>
    </location>
    <ligand>
        <name>Ca(2+)</name>
        <dbReference type="ChEBI" id="CHEBI:29108"/>
        <label>2</label>
        <note>high affinity</note>
    </ligand>
</feature>
<feature type="binding site" evidence="4 10">
    <location>
        <position position="67"/>
    </location>
    <ligand>
        <name>Ca(2+)</name>
        <dbReference type="ChEBI" id="CHEBI:29108"/>
        <label>2</label>
        <note>high affinity</note>
    </ligand>
</feature>
<feature type="binding site" evidence="4 10">
    <location>
        <position position="69"/>
    </location>
    <ligand>
        <name>Ca(2+)</name>
        <dbReference type="ChEBI" id="CHEBI:29108"/>
        <label>2</label>
        <note>high affinity</note>
    </ligand>
</feature>
<feature type="binding site" evidence="4 10">
    <location>
        <position position="74"/>
    </location>
    <ligand>
        <name>Ca(2+)</name>
        <dbReference type="ChEBI" id="CHEBI:29108"/>
        <label>2</label>
        <note>high affinity</note>
    </ligand>
</feature>
<feature type="helix" evidence="11">
    <location>
        <begin position="4"/>
        <end position="20"/>
    </location>
</feature>
<feature type="strand" evidence="11">
    <location>
        <begin position="22"/>
        <end position="25"/>
    </location>
</feature>
<feature type="helix" evidence="11">
    <location>
        <begin position="31"/>
        <end position="41"/>
    </location>
</feature>
<feature type="helix" evidence="11">
    <location>
        <begin position="43"/>
        <end position="46"/>
    </location>
</feature>
<feature type="helix" evidence="11">
    <location>
        <begin position="52"/>
        <end position="62"/>
    </location>
</feature>
<feature type="strand" evidence="11">
    <location>
        <begin position="67"/>
        <end position="71"/>
    </location>
</feature>
<feature type="helix" evidence="11">
    <location>
        <begin position="72"/>
        <end position="97"/>
    </location>
</feature>
<organism evidence="7">
    <name type="scientific">Danio rerio</name>
    <name type="common">Zebrafish</name>
    <name type="synonym">Brachydanio rerio</name>
    <dbReference type="NCBI Taxonomy" id="7955"/>
    <lineage>
        <taxon>Eukaryota</taxon>
        <taxon>Metazoa</taxon>
        <taxon>Chordata</taxon>
        <taxon>Craniata</taxon>
        <taxon>Vertebrata</taxon>
        <taxon>Euteleostomi</taxon>
        <taxon>Actinopterygii</taxon>
        <taxon>Neopterygii</taxon>
        <taxon>Teleostei</taxon>
        <taxon>Ostariophysi</taxon>
        <taxon>Cypriniformes</taxon>
        <taxon>Danionidae</taxon>
        <taxon>Danioninae</taxon>
        <taxon>Danio</taxon>
    </lineage>
</organism>
<gene>
    <name evidence="9" type="primary">s100z</name>
</gene>
<dbReference type="EMBL" id="CABZ01034876">
    <property type="status" value="NOT_ANNOTATED_CDS"/>
    <property type="molecule type" value="Genomic_DNA"/>
</dbReference>
<dbReference type="EMBL" id="CABZ01034877">
    <property type="status" value="NOT_ANNOTATED_CDS"/>
    <property type="molecule type" value="Genomic_DNA"/>
</dbReference>
<dbReference type="EMBL" id="CABZ01034878">
    <property type="status" value="NOT_ANNOTATED_CDS"/>
    <property type="molecule type" value="Genomic_DNA"/>
</dbReference>
<dbReference type="EMBL" id="BC095285">
    <property type="protein sequence ID" value="AAH95285.1"/>
    <property type="molecule type" value="mRNA"/>
</dbReference>
<dbReference type="RefSeq" id="NP_001019562.1">
    <property type="nucleotide sequence ID" value="NM_001024391.2"/>
</dbReference>
<dbReference type="PDB" id="2Y5I">
    <property type="method" value="X-ray"/>
    <property type="resolution" value="2.03 A"/>
    <property type="chains" value="A/B/C/D/E/F=1-99"/>
</dbReference>
<dbReference type="PDBsum" id="2Y5I"/>
<dbReference type="SMR" id="Q503K9"/>
<dbReference type="FunCoup" id="Q503K9">
    <property type="interactions" value="1029"/>
</dbReference>
<dbReference type="STRING" id="7955.ENSDARP00000056560"/>
<dbReference type="PaxDb" id="7955-ENSDARP00000056560"/>
<dbReference type="Ensembl" id="ENSDART00000056561">
    <property type="protein sequence ID" value="ENSDARP00000056560"/>
    <property type="gene ID" value="ENSDARG00000038729"/>
</dbReference>
<dbReference type="GeneID" id="554089"/>
<dbReference type="KEGG" id="dre:554089"/>
<dbReference type="AGR" id="ZFIN:ZDB-GENE-050522-69"/>
<dbReference type="CTD" id="170591"/>
<dbReference type="ZFIN" id="ZDB-GENE-050522-69">
    <property type="gene designation" value="s100z"/>
</dbReference>
<dbReference type="eggNOG" id="ENOG502S17E">
    <property type="taxonomic scope" value="Eukaryota"/>
</dbReference>
<dbReference type="HOGENOM" id="CLU_138624_2_1_1"/>
<dbReference type="InParanoid" id="Q503K9"/>
<dbReference type="OMA" id="QYSCKEG"/>
<dbReference type="OrthoDB" id="26525at2759"/>
<dbReference type="TreeFam" id="TF332727"/>
<dbReference type="EvolutionaryTrace" id="Q503K9"/>
<dbReference type="PRO" id="PR:Q503K9"/>
<dbReference type="Proteomes" id="UP000000437">
    <property type="component" value="Chromosome 21"/>
</dbReference>
<dbReference type="Bgee" id="ENSDARG00000038729">
    <property type="expression patterns" value="Expressed in granulocyte and 18 other cell types or tissues"/>
</dbReference>
<dbReference type="GO" id="GO:0005509">
    <property type="term" value="F:calcium ion binding"/>
    <property type="evidence" value="ECO:0000314"/>
    <property type="project" value="UniProtKB"/>
</dbReference>
<dbReference type="GO" id="GO:0048306">
    <property type="term" value="F:calcium-dependent protein binding"/>
    <property type="evidence" value="ECO:0000318"/>
    <property type="project" value="GO_Central"/>
</dbReference>
<dbReference type="CDD" id="cd05026">
    <property type="entry name" value="S-100Z"/>
    <property type="match status" value="1"/>
</dbReference>
<dbReference type="FunFam" id="1.10.238.10:FF:000044">
    <property type="entry name" value="Protein S100"/>
    <property type="match status" value="1"/>
</dbReference>
<dbReference type="Gene3D" id="1.10.238.10">
    <property type="entry name" value="EF-hand"/>
    <property type="match status" value="1"/>
</dbReference>
<dbReference type="InterPro" id="IPR011992">
    <property type="entry name" value="EF-hand-dom_pair"/>
</dbReference>
<dbReference type="InterPro" id="IPR018247">
    <property type="entry name" value="EF_Hand_1_Ca_BS"/>
</dbReference>
<dbReference type="InterPro" id="IPR002048">
    <property type="entry name" value="EF_hand_dom"/>
</dbReference>
<dbReference type="InterPro" id="IPR001751">
    <property type="entry name" value="S100/CaBP7/8-like_CS"/>
</dbReference>
<dbReference type="InterPro" id="IPR013787">
    <property type="entry name" value="S100_Ca-bd_sub"/>
</dbReference>
<dbReference type="InterPro" id="IPR028490">
    <property type="entry name" value="S100Z"/>
</dbReference>
<dbReference type="PANTHER" id="PTHR11639:SF134">
    <property type="entry name" value="PROTEIN S100-A1-RELATED"/>
    <property type="match status" value="1"/>
</dbReference>
<dbReference type="PANTHER" id="PTHR11639">
    <property type="entry name" value="S100 CALCIUM-BINDING PROTEIN"/>
    <property type="match status" value="1"/>
</dbReference>
<dbReference type="Pfam" id="PF01023">
    <property type="entry name" value="S_100"/>
    <property type="match status" value="1"/>
</dbReference>
<dbReference type="SMART" id="SM00054">
    <property type="entry name" value="EFh"/>
    <property type="match status" value="1"/>
</dbReference>
<dbReference type="SMART" id="SM01394">
    <property type="entry name" value="S_100"/>
    <property type="match status" value="1"/>
</dbReference>
<dbReference type="SUPFAM" id="SSF47473">
    <property type="entry name" value="EF-hand"/>
    <property type="match status" value="1"/>
</dbReference>
<dbReference type="PROSITE" id="PS00018">
    <property type="entry name" value="EF_HAND_1"/>
    <property type="match status" value="1"/>
</dbReference>
<dbReference type="PROSITE" id="PS50222">
    <property type="entry name" value="EF_HAND_2"/>
    <property type="match status" value="1"/>
</dbReference>
<dbReference type="PROSITE" id="PS00303">
    <property type="entry name" value="S100_CABP"/>
    <property type="match status" value="1"/>
</dbReference>
<sequence length="99" mass="11239">MPSKLEGAMDALITVFHNYSGSEGDKYKLSKGELKELLNAELTDFLMSQKDPMLVEKIMNDLDSNKDNEVDFNEFVVLVAALTVACNDFFQEQQKKRSK</sequence>
<evidence type="ECO:0000255" key="1">
    <source>
        <dbReference type="PROSITE-ProRule" id="PRU00448"/>
    </source>
</evidence>
<evidence type="ECO:0000255" key="2">
    <source>
        <dbReference type="RuleBase" id="RU361184"/>
    </source>
</evidence>
<evidence type="ECO:0000269" key="3">
    <source>
    </source>
</evidence>
<evidence type="ECO:0000269" key="4">
    <source>
    </source>
</evidence>
<evidence type="ECO:0000269" key="5">
    <source>
    </source>
</evidence>
<evidence type="ECO:0000305" key="6"/>
<evidence type="ECO:0000312" key="7">
    <source>
        <dbReference type="EMBL" id="AAH95285.1"/>
    </source>
</evidence>
<evidence type="ECO:0000312" key="8">
    <source>
        <dbReference type="RefSeq" id="NP_001019562.1"/>
    </source>
</evidence>
<evidence type="ECO:0000312" key="9">
    <source>
        <dbReference type="ZFIN" id="ZDB-GENE-050522-69"/>
    </source>
</evidence>
<evidence type="ECO:0007744" key="10">
    <source>
        <dbReference type="PDB" id="2Y5I"/>
    </source>
</evidence>
<evidence type="ECO:0007829" key="11">
    <source>
        <dbReference type="PDB" id="2Y5I"/>
    </source>
</evidence>
<reference key="1">
    <citation type="journal article" date="2013" name="Nature">
        <title>The zebrafish reference genome sequence and its relationship to the human genome.</title>
        <authorList>
            <person name="Howe K."/>
            <person name="Clark M.D."/>
            <person name="Torroja C.F."/>
            <person name="Torrance J."/>
            <person name="Berthelot C."/>
            <person name="Muffato M."/>
            <person name="Collins J.E."/>
            <person name="Humphray S."/>
            <person name="McLaren K."/>
            <person name="Matthews L."/>
            <person name="McLaren S."/>
            <person name="Sealy I."/>
            <person name="Caccamo M."/>
            <person name="Churcher C."/>
            <person name="Scott C."/>
            <person name="Barrett J.C."/>
            <person name="Koch R."/>
            <person name="Rauch G.J."/>
            <person name="White S."/>
            <person name="Chow W."/>
            <person name="Kilian B."/>
            <person name="Quintais L.T."/>
            <person name="Guerra-Assuncao J.A."/>
            <person name="Zhou Y."/>
            <person name="Gu Y."/>
            <person name="Yen J."/>
            <person name="Vogel J.H."/>
            <person name="Eyre T."/>
            <person name="Redmond S."/>
            <person name="Banerjee R."/>
            <person name="Chi J."/>
            <person name="Fu B."/>
            <person name="Langley E."/>
            <person name="Maguire S.F."/>
            <person name="Laird G.K."/>
            <person name="Lloyd D."/>
            <person name="Kenyon E."/>
            <person name="Donaldson S."/>
            <person name="Sehra H."/>
            <person name="Almeida-King J."/>
            <person name="Loveland J."/>
            <person name="Trevanion S."/>
            <person name="Jones M."/>
            <person name="Quail M."/>
            <person name="Willey D."/>
            <person name="Hunt A."/>
            <person name="Burton J."/>
            <person name="Sims S."/>
            <person name="McLay K."/>
            <person name="Plumb B."/>
            <person name="Davis J."/>
            <person name="Clee C."/>
            <person name="Oliver K."/>
            <person name="Clark R."/>
            <person name="Riddle C."/>
            <person name="Elliot D."/>
            <person name="Threadgold G."/>
            <person name="Harden G."/>
            <person name="Ware D."/>
            <person name="Begum S."/>
            <person name="Mortimore B."/>
            <person name="Kerry G."/>
            <person name="Heath P."/>
            <person name="Phillimore B."/>
            <person name="Tracey A."/>
            <person name="Corby N."/>
            <person name="Dunn M."/>
            <person name="Johnson C."/>
            <person name="Wood J."/>
            <person name="Clark S."/>
            <person name="Pelan S."/>
            <person name="Griffiths G."/>
            <person name="Smith M."/>
            <person name="Glithero R."/>
            <person name="Howden P."/>
            <person name="Barker N."/>
            <person name="Lloyd C."/>
            <person name="Stevens C."/>
            <person name="Harley J."/>
            <person name="Holt K."/>
            <person name="Panagiotidis G."/>
            <person name="Lovell J."/>
            <person name="Beasley H."/>
            <person name="Henderson C."/>
            <person name="Gordon D."/>
            <person name="Auger K."/>
            <person name="Wright D."/>
            <person name="Collins J."/>
            <person name="Raisen C."/>
            <person name="Dyer L."/>
            <person name="Leung K."/>
            <person name="Robertson L."/>
            <person name="Ambridge K."/>
            <person name="Leongamornlert D."/>
            <person name="McGuire S."/>
            <person name="Gilderthorp R."/>
            <person name="Griffiths C."/>
            <person name="Manthravadi D."/>
            <person name="Nichol S."/>
            <person name="Barker G."/>
            <person name="Whitehead S."/>
            <person name="Kay M."/>
            <person name="Brown J."/>
            <person name="Murnane C."/>
            <person name="Gray E."/>
            <person name="Humphries M."/>
            <person name="Sycamore N."/>
            <person name="Barker D."/>
            <person name="Saunders D."/>
            <person name="Wallis J."/>
            <person name="Babbage A."/>
            <person name="Hammond S."/>
            <person name="Mashreghi-Mohammadi M."/>
            <person name="Barr L."/>
            <person name="Martin S."/>
            <person name="Wray P."/>
            <person name="Ellington A."/>
            <person name="Matthews N."/>
            <person name="Ellwood M."/>
            <person name="Woodmansey R."/>
            <person name="Clark G."/>
            <person name="Cooper J."/>
            <person name="Tromans A."/>
            <person name="Grafham D."/>
            <person name="Skuce C."/>
            <person name="Pandian R."/>
            <person name="Andrews R."/>
            <person name="Harrison E."/>
            <person name="Kimberley A."/>
            <person name="Garnett J."/>
            <person name="Fosker N."/>
            <person name="Hall R."/>
            <person name="Garner P."/>
            <person name="Kelly D."/>
            <person name="Bird C."/>
            <person name="Palmer S."/>
            <person name="Gehring I."/>
            <person name="Berger A."/>
            <person name="Dooley C.M."/>
            <person name="Ersan-Urun Z."/>
            <person name="Eser C."/>
            <person name="Geiger H."/>
            <person name="Geisler M."/>
            <person name="Karotki L."/>
            <person name="Kirn A."/>
            <person name="Konantz J."/>
            <person name="Konantz M."/>
            <person name="Oberlander M."/>
            <person name="Rudolph-Geiger S."/>
            <person name="Teucke M."/>
            <person name="Lanz C."/>
            <person name="Raddatz G."/>
            <person name="Osoegawa K."/>
            <person name="Zhu B."/>
            <person name="Rapp A."/>
            <person name="Widaa S."/>
            <person name="Langford C."/>
            <person name="Yang F."/>
            <person name="Schuster S.C."/>
            <person name="Carter N.P."/>
            <person name="Harrow J."/>
            <person name="Ning Z."/>
            <person name="Herrero J."/>
            <person name="Searle S.M."/>
            <person name="Enright A."/>
            <person name="Geisler R."/>
            <person name="Plasterk R.H."/>
            <person name="Lee C."/>
            <person name="Westerfield M."/>
            <person name="de Jong P.J."/>
            <person name="Zon L.I."/>
            <person name="Postlethwait J.H."/>
            <person name="Nusslein-Volhard C."/>
            <person name="Hubbard T.J."/>
            <person name="Roest Crollius H."/>
            <person name="Rogers J."/>
            <person name="Stemple D.L."/>
        </authorList>
    </citation>
    <scope>NUCLEOTIDE SEQUENCE [LARGE SCALE GENOMIC DNA]</scope>
    <source>
        <strain>Tuebingen</strain>
    </source>
</reference>
<reference evidence="7" key="2">
    <citation type="submission" date="2005-05" db="EMBL/GenBank/DDBJ databases">
        <authorList>
            <consortium name="NIH - Zebrafish Gene Collection (ZGC) project"/>
        </authorList>
    </citation>
    <scope>NUCLEOTIDE SEQUENCE [LARGE SCALE MRNA]</scope>
    <source>
        <tissue evidence="7">Olfactory epithelium</tissue>
    </source>
</reference>
<reference evidence="6" key="3">
    <citation type="journal article" date="2008" name="BMC Evol. Biol.">
        <title>Structural and functional diversification in the teleost S100 family of calcium-binding proteins.</title>
        <authorList>
            <person name="Kraemer A.M."/>
            <person name="Saraiva L.R."/>
            <person name="Korsching S.I."/>
        </authorList>
    </citation>
    <scope>TISSUE SPECIFICITY</scope>
</reference>
<reference evidence="6" key="4">
    <citation type="journal article" date="2019" name="Fish Shellfish Immunol.">
        <title>Transcriptomic responses of S100 family to bacterial and viral infection in zebrafish.</title>
        <authorList>
            <person name="Zhang C."/>
            <person name="Zhang Q."/>
            <person name="Wang J."/>
            <person name="Tian J."/>
            <person name="Song Y."/>
            <person name="Xie H."/>
            <person name="Chang M."/>
            <person name="Nie P."/>
            <person name="Gao Q."/>
            <person name="Zou J."/>
        </authorList>
    </citation>
    <scope>TISSUE SPECIFICITY</scope>
    <scope>DEVELOPMENTAL STAGE</scope>
    <scope>INDUCTION</scope>
</reference>
<reference evidence="10" key="5">
    <citation type="journal article" date="2011" name="J. Mol. Biol.">
        <title>The crystal structure of zebrafish S100Z: implications for calcium-promoted S100 protein oligomerisation.</title>
        <authorList>
            <person name="Moroz O.V."/>
            <person name="Bronstein I.B."/>
            <person name="Wilson K.S."/>
        </authorList>
    </citation>
    <scope>X-RAY CRYSTALLOGRAPHY (2.03 ANGSTROMS) IN COMPLEX WITH CALCIUM</scope>
    <scope>SUBUNIT</scope>
    <source>
        <strain evidence="8">Tuebingen</strain>
    </source>
</reference>
<proteinExistence type="evidence at protein level"/>
<protein>
    <recommendedName>
        <fullName evidence="6">Protein S100-Z</fullName>
    </recommendedName>
    <alternativeName>
        <fullName evidence="9">S100 calcium-binding protein Z</fullName>
    </alternativeName>
</protein>
<accession>Q503K9</accession>
<accession>A0A8M1N6S9</accession>
<name>S100Z_DANRE</name>